<comment type="function">
    <text evidence="1">NDH-1 shuttles electrons from NADH, via FMN and iron-sulfur (Fe-S) centers, to quinones in the respiratory chain. Couples the redox reaction to proton translocation (for every two electrons transferred, four hydrogen ions are translocated across the cytoplasmic membrane), and thus conserves the redox energy in a proton gradient (By similarity).</text>
</comment>
<comment type="catalytic activity">
    <reaction>
        <text>a quinone + NADH + 5 H(+)(in) = a quinol + NAD(+) + 4 H(+)(out)</text>
        <dbReference type="Rhea" id="RHEA:57888"/>
        <dbReference type="ChEBI" id="CHEBI:15378"/>
        <dbReference type="ChEBI" id="CHEBI:24646"/>
        <dbReference type="ChEBI" id="CHEBI:57540"/>
        <dbReference type="ChEBI" id="CHEBI:57945"/>
        <dbReference type="ChEBI" id="CHEBI:132124"/>
    </reaction>
</comment>
<comment type="cofactor">
    <cofactor evidence="3">
        <name>FMN</name>
        <dbReference type="ChEBI" id="CHEBI:58210"/>
    </cofactor>
    <text evidence="3">Binds 1 FMN.</text>
</comment>
<comment type="cofactor">
    <cofactor evidence="3">
        <name>[4Fe-4S] cluster</name>
        <dbReference type="ChEBI" id="CHEBI:49883"/>
    </cofactor>
    <text evidence="3">Binds 1 [4Fe-4S] cluster.</text>
</comment>
<comment type="similarity">
    <text evidence="3">Belongs to the complex I 51 kDa subunit family.</text>
</comment>
<keyword id="KW-0004">4Fe-4S</keyword>
<keyword id="KW-0285">Flavoprotein</keyword>
<keyword id="KW-0288">FMN</keyword>
<keyword id="KW-0408">Iron</keyword>
<keyword id="KW-0411">Iron-sulfur</keyword>
<keyword id="KW-0479">Metal-binding</keyword>
<keyword id="KW-0520">NAD</keyword>
<keyword id="KW-0874">Quinone</keyword>
<keyword id="KW-1278">Translocase</keyword>
<proteinExistence type="inferred from homology"/>
<dbReference type="EC" id="7.1.1.-"/>
<dbReference type="EMBL" id="AE006914">
    <property type="protein sequence ID" value="AAL02693.1"/>
    <property type="molecule type" value="Genomic_DNA"/>
</dbReference>
<dbReference type="PIR" id="C97719">
    <property type="entry name" value="C97719"/>
</dbReference>
<dbReference type="RefSeq" id="WP_010976831.1">
    <property type="nucleotide sequence ID" value="NC_003103.1"/>
</dbReference>
<dbReference type="SMR" id="Q92JB2"/>
<dbReference type="GeneID" id="928038"/>
<dbReference type="KEGG" id="rco:RC0155"/>
<dbReference type="HOGENOM" id="CLU_014881_0_1_5"/>
<dbReference type="Proteomes" id="UP000000816">
    <property type="component" value="Chromosome"/>
</dbReference>
<dbReference type="GO" id="GO:0051539">
    <property type="term" value="F:4 iron, 4 sulfur cluster binding"/>
    <property type="evidence" value="ECO:0007669"/>
    <property type="project" value="UniProtKB-KW"/>
</dbReference>
<dbReference type="GO" id="GO:0010181">
    <property type="term" value="F:FMN binding"/>
    <property type="evidence" value="ECO:0007669"/>
    <property type="project" value="InterPro"/>
</dbReference>
<dbReference type="GO" id="GO:0046872">
    <property type="term" value="F:metal ion binding"/>
    <property type="evidence" value="ECO:0007669"/>
    <property type="project" value="UniProtKB-KW"/>
</dbReference>
<dbReference type="GO" id="GO:0051287">
    <property type="term" value="F:NAD binding"/>
    <property type="evidence" value="ECO:0007669"/>
    <property type="project" value="InterPro"/>
</dbReference>
<dbReference type="GO" id="GO:0008137">
    <property type="term" value="F:NADH dehydrogenase (ubiquinone) activity"/>
    <property type="evidence" value="ECO:0007669"/>
    <property type="project" value="InterPro"/>
</dbReference>
<dbReference type="GO" id="GO:0048038">
    <property type="term" value="F:quinone binding"/>
    <property type="evidence" value="ECO:0007669"/>
    <property type="project" value="UniProtKB-KW"/>
</dbReference>
<dbReference type="FunFam" id="1.20.1440.230:FF:000001">
    <property type="entry name" value="Mitochondrial NADH dehydrogenase flavoprotein 1"/>
    <property type="match status" value="1"/>
</dbReference>
<dbReference type="FunFam" id="3.10.20.600:FF:000001">
    <property type="entry name" value="NADH dehydrogenase [ubiquinone] flavoprotein 1, mitochondrial"/>
    <property type="match status" value="1"/>
</dbReference>
<dbReference type="FunFam" id="3.40.50.11540:FF:000001">
    <property type="entry name" value="NADH dehydrogenase [ubiquinone] flavoprotein 1, mitochondrial"/>
    <property type="match status" value="1"/>
</dbReference>
<dbReference type="Gene3D" id="3.10.20.600">
    <property type="match status" value="1"/>
</dbReference>
<dbReference type="Gene3D" id="3.40.50.11540">
    <property type="entry name" value="NADH-ubiquinone oxidoreductase 51kDa subunit"/>
    <property type="match status" value="1"/>
</dbReference>
<dbReference type="Gene3D" id="1.20.1440.230">
    <property type="entry name" value="NADH-ubiquinone oxidoreductase 51kDa subunit, iron-sulphur binding domain"/>
    <property type="match status" value="1"/>
</dbReference>
<dbReference type="InterPro" id="IPR050837">
    <property type="entry name" value="ComplexI_51kDa_subunit"/>
</dbReference>
<dbReference type="InterPro" id="IPR001949">
    <property type="entry name" value="NADH-UbQ_OxRdtase_51kDa_CS"/>
</dbReference>
<dbReference type="InterPro" id="IPR011537">
    <property type="entry name" value="NADH-UbQ_OxRdtase_suF"/>
</dbReference>
<dbReference type="InterPro" id="IPR011538">
    <property type="entry name" value="Nuo51_FMN-bd"/>
</dbReference>
<dbReference type="InterPro" id="IPR037225">
    <property type="entry name" value="Nuo51_FMN-bd_sf"/>
</dbReference>
<dbReference type="InterPro" id="IPR019575">
    <property type="entry name" value="Nuop51_4Fe4S-bd"/>
</dbReference>
<dbReference type="InterPro" id="IPR037207">
    <property type="entry name" value="Nuop51_4Fe4S-bd_sf"/>
</dbReference>
<dbReference type="InterPro" id="IPR054765">
    <property type="entry name" value="SLBB_dom"/>
</dbReference>
<dbReference type="NCBIfam" id="TIGR01959">
    <property type="entry name" value="nuoF_fam"/>
    <property type="match status" value="1"/>
</dbReference>
<dbReference type="NCBIfam" id="NF010120">
    <property type="entry name" value="PRK13596.1"/>
    <property type="match status" value="1"/>
</dbReference>
<dbReference type="PANTHER" id="PTHR11780:SF10">
    <property type="entry name" value="NADH DEHYDROGENASE [UBIQUINONE] FLAVOPROTEIN 1, MITOCHONDRIAL"/>
    <property type="match status" value="1"/>
</dbReference>
<dbReference type="PANTHER" id="PTHR11780">
    <property type="entry name" value="NADH-UBIQUINONE OXIDOREDUCTASE FLAVOPROTEIN 1 NDUFV1"/>
    <property type="match status" value="1"/>
</dbReference>
<dbReference type="Pfam" id="PF01512">
    <property type="entry name" value="Complex1_51K"/>
    <property type="match status" value="1"/>
</dbReference>
<dbReference type="Pfam" id="PF10589">
    <property type="entry name" value="NADH_4Fe-4S"/>
    <property type="match status" value="1"/>
</dbReference>
<dbReference type="Pfam" id="PF22461">
    <property type="entry name" value="SLBB_2"/>
    <property type="match status" value="1"/>
</dbReference>
<dbReference type="SMART" id="SM00928">
    <property type="entry name" value="NADH_4Fe-4S"/>
    <property type="match status" value="1"/>
</dbReference>
<dbReference type="SUPFAM" id="SSF142019">
    <property type="entry name" value="Nqo1 FMN-binding domain-like"/>
    <property type="match status" value="1"/>
</dbReference>
<dbReference type="SUPFAM" id="SSF142984">
    <property type="entry name" value="Nqo1 middle domain-like"/>
    <property type="match status" value="1"/>
</dbReference>
<dbReference type="SUPFAM" id="SSF140490">
    <property type="entry name" value="Nqo1C-terminal domain-like"/>
    <property type="match status" value="1"/>
</dbReference>
<dbReference type="PROSITE" id="PS00644">
    <property type="entry name" value="COMPLEX1_51K_1"/>
    <property type="match status" value="1"/>
</dbReference>
<dbReference type="PROSITE" id="PS00645">
    <property type="entry name" value="COMPLEX1_51K_2"/>
    <property type="match status" value="1"/>
</dbReference>
<evidence type="ECO:0000250" key="1"/>
<evidence type="ECO:0000255" key="2"/>
<evidence type="ECO:0000305" key="3"/>
<sequence length="421" mass="46139">MLKEEDKIFTNLHGQQSHDLKSSKKRGDWENTKALLDKGRDFIVEEVKKSGLRGRGGAGFSTGMKWSFMPKNLEKSCYLVVNADESEPGTCKDRDILRFEPHKLIEGCLLASFAIGANNCYIYIRGEFYNEASNIQRALDEAYKEGLIGKNSCGSGFDCNIYLHRGAGAYICGEETALLESLEGKKGMPRLKPPFPAGFGLYGCPTTINNVESIAVVPTILRRGASWFAGIGKPNNTGTKIFCISGHVNKPCNVEEAMGISLKELIEKYAGGVRGGWDNLKAIIPGGSSVPLLPKSLCEVDMDFDSLRTAGSGLGTGGIIVMDQSTDIIYAIARLSKFYMHESCGQCTPCREGTGWMWRVMMRLVKGNVKKSEIDELLNVTKEIEGHTICALGDAAAWPIQGLIRHFRSEIEARIKSDSVV</sequence>
<name>NUOF_RICCN</name>
<accession>Q92JB2</accession>
<protein>
    <recommendedName>
        <fullName>NADH-quinone oxidoreductase subunit F</fullName>
        <ecNumber>7.1.1.-</ecNumber>
    </recommendedName>
    <alternativeName>
        <fullName>NADH dehydrogenase I subunit F</fullName>
    </alternativeName>
    <alternativeName>
        <fullName>NDH-1 subunit F</fullName>
    </alternativeName>
</protein>
<organism>
    <name type="scientific">Rickettsia conorii (strain ATCC VR-613 / Malish 7)</name>
    <dbReference type="NCBI Taxonomy" id="272944"/>
    <lineage>
        <taxon>Bacteria</taxon>
        <taxon>Pseudomonadati</taxon>
        <taxon>Pseudomonadota</taxon>
        <taxon>Alphaproteobacteria</taxon>
        <taxon>Rickettsiales</taxon>
        <taxon>Rickettsiaceae</taxon>
        <taxon>Rickettsieae</taxon>
        <taxon>Rickettsia</taxon>
        <taxon>spotted fever group</taxon>
    </lineage>
</organism>
<feature type="chain" id="PRO_0000118579" description="NADH-quinone oxidoreductase subunit F">
    <location>
        <begin position="1"/>
        <end position="421"/>
    </location>
</feature>
<feature type="binding site" evidence="1">
    <location>
        <begin position="54"/>
        <end position="63"/>
    </location>
    <ligand>
        <name>NAD(+)</name>
        <dbReference type="ChEBI" id="CHEBI:57540"/>
    </ligand>
</feature>
<feature type="binding site" evidence="1">
    <location>
        <begin position="166"/>
        <end position="213"/>
    </location>
    <ligand>
        <name>FMN</name>
        <dbReference type="ChEBI" id="CHEBI:58210"/>
    </ligand>
</feature>
<feature type="binding site" evidence="2">
    <location>
        <position position="344"/>
    </location>
    <ligand>
        <name>[4Fe-4S] cluster</name>
        <dbReference type="ChEBI" id="CHEBI:49883"/>
    </ligand>
</feature>
<feature type="binding site" evidence="2">
    <location>
        <position position="347"/>
    </location>
    <ligand>
        <name>[4Fe-4S] cluster</name>
        <dbReference type="ChEBI" id="CHEBI:49883"/>
    </ligand>
</feature>
<feature type="binding site" evidence="2">
    <location>
        <position position="350"/>
    </location>
    <ligand>
        <name>[4Fe-4S] cluster</name>
        <dbReference type="ChEBI" id="CHEBI:49883"/>
    </ligand>
</feature>
<feature type="binding site" evidence="2">
    <location>
        <position position="390"/>
    </location>
    <ligand>
        <name>[4Fe-4S] cluster</name>
        <dbReference type="ChEBI" id="CHEBI:49883"/>
    </ligand>
</feature>
<gene>
    <name type="primary">nuoF</name>
    <name type="ordered locus">RC0155</name>
</gene>
<reference key="1">
    <citation type="journal article" date="2001" name="Science">
        <title>Mechanisms of evolution in Rickettsia conorii and R. prowazekii.</title>
        <authorList>
            <person name="Ogata H."/>
            <person name="Audic S."/>
            <person name="Renesto-Audiffren P."/>
            <person name="Fournier P.-E."/>
            <person name="Barbe V."/>
            <person name="Samson D."/>
            <person name="Roux V."/>
            <person name="Cossart P."/>
            <person name="Weissenbach J."/>
            <person name="Claverie J.-M."/>
            <person name="Raoult D."/>
        </authorList>
    </citation>
    <scope>NUCLEOTIDE SEQUENCE [LARGE SCALE GENOMIC DNA]</scope>
    <source>
        <strain>ATCC VR-613 / Malish 7</strain>
    </source>
</reference>